<evidence type="ECO:0000250" key="1"/>
<evidence type="ECO:0000250" key="2">
    <source>
        <dbReference type="UniProtKB" id="P18509"/>
    </source>
</evidence>
<evidence type="ECO:0000255" key="3"/>
<evidence type="ECO:0000305" key="4"/>
<accession>Q09169</accession>
<accession>Q9I8R7</accession>
<accession>Q9I8R8</accession>
<organism>
    <name type="scientific">Pelophylax ridibundus</name>
    <name type="common">Marsh frog</name>
    <name type="synonym">Rana ridibunda</name>
    <dbReference type="NCBI Taxonomy" id="8406"/>
    <lineage>
        <taxon>Eukaryota</taxon>
        <taxon>Metazoa</taxon>
        <taxon>Chordata</taxon>
        <taxon>Craniata</taxon>
        <taxon>Vertebrata</taxon>
        <taxon>Euteleostomi</taxon>
        <taxon>Amphibia</taxon>
        <taxon>Batrachia</taxon>
        <taxon>Anura</taxon>
        <taxon>Neobatrachia</taxon>
        <taxon>Ranoidea</taxon>
        <taxon>Ranidae</taxon>
        <taxon>Pelophylax</taxon>
    </lineage>
</organism>
<feature type="signal peptide" evidence="3">
    <location>
        <begin position="1"/>
        <end position="22"/>
    </location>
</feature>
<feature type="propeptide" id="PRO_0000011516">
    <location>
        <begin position="23"/>
        <end position="76"/>
    </location>
</feature>
<feature type="peptide" id="PRO_0000011517" description="Growth hormone-releasing factor">
    <location>
        <begin position="79"/>
        <end position="124"/>
    </location>
</feature>
<feature type="peptide" id="PRO_0000011518" description="Pituitary adenylate cyclase-activating polypeptide 38">
    <location>
        <begin position="127"/>
        <end position="164"/>
    </location>
</feature>
<feature type="peptide" id="PRO_0000011519" description="Pituitary adenylate cyclase-activating polypeptide 27">
    <location>
        <begin position="127"/>
        <end position="153"/>
    </location>
</feature>
<feature type="propeptide" id="PRO_0000011520">
    <location>
        <begin position="168"/>
        <end position="171"/>
    </location>
</feature>
<feature type="region of interest" description="Important for receptor binding" evidence="2">
    <location>
        <begin position="145"/>
        <end position="153"/>
    </location>
</feature>
<feature type="modified residue" description="Lysine amide" evidence="1">
    <location>
        <position position="164"/>
    </location>
</feature>
<feature type="splice variant" id="VSP_001761" description="In isoform 2." evidence="4">
    <original>RHADDLLNKAYRNLLGQLSARKYLHTLMAKHLG</original>
    <variation>S</variation>
    <location>
        <begin position="78"/>
        <end position="110"/>
    </location>
</feature>
<reference key="1">
    <citation type="journal article" date="2000" name="J. Comp. Neurol.">
        <title>Structure and distribution of the mRNAs encoding pituitary adenylate cyclase-activating polypeptide and growth hormone-releasing hormone-like peptide in the frog, Rana ridibunda.</title>
        <authorList>
            <person name="Alexandre D."/>
            <person name="Vaudry H."/>
            <person name="Jegou S."/>
            <person name="Anouar Y."/>
        </authorList>
    </citation>
    <scope>NUCLEOTIDE SEQUENCE [MRNA]</scope>
</reference>
<reference key="2">
    <citation type="journal article" date="1991" name="Endocrinology">
        <title>Primary structure of frog pituitary adenylate cyclase-activating polypeptide (PACAP) and effects of ovine PACAP on frog pituitary.</title>
        <authorList>
            <person name="Chartrel N."/>
            <person name="Tonon M.-C."/>
            <person name="Vaudry H."/>
            <person name="Conlon J.M."/>
        </authorList>
    </citation>
    <scope>PROTEIN SEQUENCE OF 127-164</scope>
    <source>
        <tissue>Brain</tissue>
    </source>
</reference>
<sequence length="171" mass="19680">MYRKALLVWLLVYGIMRCTVHSSPTALKYPALRLEDEVYDEDGNTLPDFAFDNNPIGIGNPASVFDDMYSFYYPAEKRHADDLLNKAYRNLLGQLSARKYLHTLMAKHLGAVSSSLEDDSEPLSKRHSDGIFTDSYSRYRKQMAVKKYLAAVLGKRYKQRIKNKGRRVAYL</sequence>
<proteinExistence type="evidence at protein level"/>
<comment type="function">
    <molecule>Growth hormone-releasing factor</molecule>
    <text>Primary role of GRF is to release GH from the pituitary.</text>
</comment>
<comment type="function">
    <text evidence="2">PACAP is a neuropeptide involved in diverse array of physiological processes through activating the PACAP subfamily of class B1 G protein-coupled receptors: VIP receptor 1 (VIPR1), VIP receptor 2 (VIPR2), and PACAP type I receptor (ADCYAP1R1). Exerts neuroprotective and general cytoprotective effects due to anti-apoptotic, anti-inflammatory, and antioxidant actions.</text>
</comment>
<comment type="subcellular location">
    <subcellularLocation>
        <location>Secreted</location>
    </subcellularLocation>
</comment>
<comment type="alternative products">
    <event type="alternative splicing"/>
    <isoform>
        <id>Q09169-1</id>
        <name>1</name>
        <sequence type="displayed"/>
    </isoform>
    <isoform>
        <id>Q09169-2</id>
        <name>2</name>
        <sequence type="described" ref="VSP_001761"/>
    </isoform>
</comment>
<comment type="similarity">
    <text evidence="4">Belongs to the glucagon family.</text>
</comment>
<keyword id="KW-0025">Alternative splicing</keyword>
<keyword id="KW-0027">Amidation</keyword>
<keyword id="KW-0165">Cleavage on pair of basic residues</keyword>
<keyword id="KW-0903">Direct protein sequencing</keyword>
<keyword id="KW-0372">Hormone</keyword>
<keyword id="KW-0964">Secreted</keyword>
<keyword id="KW-0732">Signal</keyword>
<protein>
    <recommendedName>
        <fullName>Glucagon family neuropeptides</fullName>
    </recommendedName>
    <component>
        <recommendedName>
            <fullName>Growth hormone-releasing factor</fullName>
            <shortName>GRF</shortName>
        </recommendedName>
        <alternativeName>
            <fullName>Growth hormone-releasing hormone</fullName>
            <shortName>GHRH</shortName>
        </alternativeName>
    </component>
    <component>
        <recommendedName>
            <fullName>Pituitary adenylate cyclase-activating polypeptide 27</fullName>
            <shortName>PACAP-27</shortName>
            <shortName>PACAP27</shortName>
        </recommendedName>
    </component>
    <component>
        <recommendedName>
            <fullName>Pituitary adenylate cyclase-activating polypeptide 38</fullName>
            <shortName>PACAP-38</shortName>
            <shortName>PACAP38</shortName>
        </recommendedName>
    </component>
</protein>
<name>PACA_PELRI</name>
<dbReference type="EMBL" id="AF221632">
    <property type="protein sequence ID" value="AAF74570.1"/>
    <property type="molecule type" value="mRNA"/>
</dbReference>
<dbReference type="EMBL" id="AF221633">
    <property type="protein sequence ID" value="AAF74571.1"/>
    <property type="molecule type" value="mRNA"/>
</dbReference>
<dbReference type="PIR" id="A49165">
    <property type="entry name" value="A49165"/>
</dbReference>
<dbReference type="SMR" id="Q09169"/>
<dbReference type="GO" id="GO:0005576">
    <property type="term" value="C:extracellular region"/>
    <property type="evidence" value="ECO:0007669"/>
    <property type="project" value="UniProtKB-SubCell"/>
</dbReference>
<dbReference type="GO" id="GO:0043005">
    <property type="term" value="C:neuron projection"/>
    <property type="evidence" value="ECO:0007669"/>
    <property type="project" value="TreeGrafter"/>
</dbReference>
<dbReference type="GO" id="GO:0043204">
    <property type="term" value="C:perikaryon"/>
    <property type="evidence" value="ECO:0007669"/>
    <property type="project" value="TreeGrafter"/>
</dbReference>
<dbReference type="GO" id="GO:0005184">
    <property type="term" value="F:neuropeptide hormone activity"/>
    <property type="evidence" value="ECO:0000250"/>
    <property type="project" value="UniProtKB"/>
</dbReference>
<dbReference type="GO" id="GO:0051428">
    <property type="term" value="F:peptide hormone receptor binding"/>
    <property type="evidence" value="ECO:0007669"/>
    <property type="project" value="TreeGrafter"/>
</dbReference>
<dbReference type="GO" id="GO:0016521">
    <property type="term" value="F:pituitary adenylate cyclase activating polypeptide activity"/>
    <property type="evidence" value="ECO:0000250"/>
    <property type="project" value="UniProtKB"/>
</dbReference>
<dbReference type="GO" id="GO:0031891">
    <property type="term" value="F:type 1 vasoactive intestinal polypeptide receptor binding"/>
    <property type="evidence" value="ECO:0000250"/>
    <property type="project" value="UniProtKB"/>
</dbReference>
<dbReference type="GO" id="GO:0031892">
    <property type="term" value="F:type 2 vasoactive intestinal polypeptide receptor binding"/>
    <property type="evidence" value="ECO:0000250"/>
    <property type="project" value="UniProtKB"/>
</dbReference>
<dbReference type="GO" id="GO:0007189">
    <property type="term" value="P:adenylate cyclase-activating G protein-coupled receptor signaling pathway"/>
    <property type="evidence" value="ECO:0000250"/>
    <property type="project" value="UniProtKB"/>
</dbReference>
<dbReference type="GO" id="GO:0031175">
    <property type="term" value="P:neuron projection development"/>
    <property type="evidence" value="ECO:0007669"/>
    <property type="project" value="TreeGrafter"/>
</dbReference>
<dbReference type="GO" id="GO:0007218">
    <property type="term" value="P:neuropeptide signaling pathway"/>
    <property type="evidence" value="ECO:0007669"/>
    <property type="project" value="TreeGrafter"/>
</dbReference>
<dbReference type="GO" id="GO:0070374">
    <property type="term" value="P:positive regulation of ERK1 and ERK2 cascade"/>
    <property type="evidence" value="ECO:0007669"/>
    <property type="project" value="TreeGrafter"/>
</dbReference>
<dbReference type="GO" id="GO:0032880">
    <property type="term" value="P:regulation of protein localization"/>
    <property type="evidence" value="ECO:0007669"/>
    <property type="project" value="TreeGrafter"/>
</dbReference>
<dbReference type="Gene3D" id="6.10.250.590">
    <property type="match status" value="1"/>
</dbReference>
<dbReference type="InterPro" id="IPR000532">
    <property type="entry name" value="Glucagon_GIP_secretin_VIP"/>
</dbReference>
<dbReference type="InterPro" id="IPR046963">
    <property type="entry name" value="VIP/GHRH-like"/>
</dbReference>
<dbReference type="PANTHER" id="PTHR11213">
    <property type="entry name" value="GLUCAGON-FAMILY NEUROPEPTIDE"/>
    <property type="match status" value="1"/>
</dbReference>
<dbReference type="PANTHER" id="PTHR11213:SF1">
    <property type="entry name" value="PITUITARY ADENYLATE CYCLASE-ACTIVATING POLYPEPTIDE"/>
    <property type="match status" value="1"/>
</dbReference>
<dbReference type="Pfam" id="PF00123">
    <property type="entry name" value="Hormone_2"/>
    <property type="match status" value="2"/>
</dbReference>
<dbReference type="PRINTS" id="PR00275">
    <property type="entry name" value="GLUCAGON"/>
</dbReference>
<dbReference type="SMART" id="SM00070">
    <property type="entry name" value="GLUCA"/>
    <property type="match status" value="2"/>
</dbReference>
<dbReference type="PROSITE" id="PS00260">
    <property type="entry name" value="GLUCAGON"/>
    <property type="match status" value="1"/>
</dbReference>
<gene>
    <name type="primary">adcyap1</name>
</gene>